<sequence>MKYFNTIVNWNMLNSNEQKNILLRPVIKNNNSIKKKVKKIIENIQVLGEKALREYTILFEKCHINKFEVSKEKMLSSSLYVNQSLKDAISTAKKNITSFHTAQILSPIDIETQVGVRCQQIYLPLNSVGIYIPSGIAPLFSTVLMLAIPAKIAGCKQIILCSPPPIDNTILYAANICGVDKIFQMGGAQAIAALAFGTKNIPKVDKIFGPGNAYVTEAKLQVSSIFNGPQIDMLAGPSELLIIADEASNADFIAADLLSQAEHSISSQVILLTPSLQLAKKVIISINNQLKNLSKSDDISTALDNSVIILTKDLFECIKISNIYAPEHLIIQTKEPRLILKEILNASSIFLGPWSPESAGDYASGTNHVLPTYGKSVSSSALGLCDFKKRVLIQELTSQGFINLSNTLKILSEAEKLEAHKNAVKIRVDFLKEKI</sequence>
<keyword id="KW-0028">Amino-acid biosynthesis</keyword>
<keyword id="KW-0368">Histidine biosynthesis</keyword>
<keyword id="KW-0479">Metal-binding</keyword>
<keyword id="KW-0520">NAD</keyword>
<keyword id="KW-0560">Oxidoreductase</keyword>
<keyword id="KW-0862">Zinc</keyword>
<name>HISX_BUCAP</name>
<dbReference type="EC" id="1.1.1.23"/>
<dbReference type="EMBL" id="AF067228">
    <property type="protein sequence ID" value="AAC97355.1"/>
    <property type="molecule type" value="Genomic_DNA"/>
</dbReference>
<dbReference type="EMBL" id="AE013218">
    <property type="protein sequence ID" value="AAM67663.1"/>
    <property type="molecule type" value="Genomic_DNA"/>
</dbReference>
<dbReference type="RefSeq" id="WP_011053629.1">
    <property type="nucleotide sequence ID" value="NC_004061.1"/>
</dbReference>
<dbReference type="SMR" id="Q9ZHE6"/>
<dbReference type="STRING" id="198804.BUsg_093"/>
<dbReference type="GeneID" id="93003562"/>
<dbReference type="KEGG" id="bas:BUsg_093"/>
<dbReference type="eggNOG" id="COG0141">
    <property type="taxonomic scope" value="Bacteria"/>
</dbReference>
<dbReference type="HOGENOM" id="CLU_006732_3_0_6"/>
<dbReference type="UniPathway" id="UPA00031">
    <property type="reaction ID" value="UER00014"/>
</dbReference>
<dbReference type="Proteomes" id="UP000000416">
    <property type="component" value="Chromosome"/>
</dbReference>
<dbReference type="GO" id="GO:0005829">
    <property type="term" value="C:cytosol"/>
    <property type="evidence" value="ECO:0007669"/>
    <property type="project" value="TreeGrafter"/>
</dbReference>
<dbReference type="GO" id="GO:0004399">
    <property type="term" value="F:histidinol dehydrogenase activity"/>
    <property type="evidence" value="ECO:0007669"/>
    <property type="project" value="UniProtKB-UniRule"/>
</dbReference>
<dbReference type="GO" id="GO:0051287">
    <property type="term" value="F:NAD binding"/>
    <property type="evidence" value="ECO:0007669"/>
    <property type="project" value="InterPro"/>
</dbReference>
<dbReference type="GO" id="GO:0008270">
    <property type="term" value="F:zinc ion binding"/>
    <property type="evidence" value="ECO:0007669"/>
    <property type="project" value="UniProtKB-UniRule"/>
</dbReference>
<dbReference type="GO" id="GO:0000105">
    <property type="term" value="P:L-histidine biosynthetic process"/>
    <property type="evidence" value="ECO:0007669"/>
    <property type="project" value="UniProtKB-UniRule"/>
</dbReference>
<dbReference type="CDD" id="cd06572">
    <property type="entry name" value="Histidinol_dh"/>
    <property type="match status" value="1"/>
</dbReference>
<dbReference type="FunFam" id="3.40.50.1980:FF:000001">
    <property type="entry name" value="Histidinol dehydrogenase"/>
    <property type="match status" value="1"/>
</dbReference>
<dbReference type="FunFam" id="3.40.50.1980:FF:000002">
    <property type="entry name" value="Histidinol dehydrogenase, chloroplastic"/>
    <property type="match status" value="1"/>
</dbReference>
<dbReference type="Gene3D" id="1.20.5.1300">
    <property type="match status" value="1"/>
</dbReference>
<dbReference type="Gene3D" id="3.40.50.1980">
    <property type="entry name" value="Nitrogenase molybdenum iron protein domain"/>
    <property type="match status" value="2"/>
</dbReference>
<dbReference type="HAMAP" id="MF_01024">
    <property type="entry name" value="HisD"/>
    <property type="match status" value="1"/>
</dbReference>
<dbReference type="InterPro" id="IPR016161">
    <property type="entry name" value="Ald_DH/histidinol_DH"/>
</dbReference>
<dbReference type="InterPro" id="IPR001692">
    <property type="entry name" value="Histidinol_DH_CS"/>
</dbReference>
<dbReference type="InterPro" id="IPR022695">
    <property type="entry name" value="Histidinol_DH_monofunct"/>
</dbReference>
<dbReference type="InterPro" id="IPR012131">
    <property type="entry name" value="Hstdl_DH"/>
</dbReference>
<dbReference type="NCBIfam" id="TIGR00069">
    <property type="entry name" value="hisD"/>
    <property type="match status" value="1"/>
</dbReference>
<dbReference type="PANTHER" id="PTHR21256:SF2">
    <property type="entry name" value="HISTIDINE BIOSYNTHESIS TRIFUNCTIONAL PROTEIN"/>
    <property type="match status" value="1"/>
</dbReference>
<dbReference type="PANTHER" id="PTHR21256">
    <property type="entry name" value="HISTIDINOL DEHYDROGENASE HDH"/>
    <property type="match status" value="1"/>
</dbReference>
<dbReference type="Pfam" id="PF00815">
    <property type="entry name" value="Histidinol_dh"/>
    <property type="match status" value="1"/>
</dbReference>
<dbReference type="PIRSF" id="PIRSF000099">
    <property type="entry name" value="Histidinol_dh"/>
    <property type="match status" value="1"/>
</dbReference>
<dbReference type="PRINTS" id="PR00083">
    <property type="entry name" value="HOLDHDRGNASE"/>
</dbReference>
<dbReference type="SUPFAM" id="SSF53720">
    <property type="entry name" value="ALDH-like"/>
    <property type="match status" value="1"/>
</dbReference>
<dbReference type="PROSITE" id="PS00611">
    <property type="entry name" value="HISOL_DEHYDROGENASE"/>
    <property type="match status" value="1"/>
</dbReference>
<proteinExistence type="inferred from homology"/>
<feature type="chain" id="PRO_0000135746" description="Histidinol dehydrogenase">
    <location>
        <begin position="1"/>
        <end position="435"/>
    </location>
</feature>
<feature type="active site" description="Proton acceptor" evidence="1">
    <location>
        <position position="327"/>
    </location>
</feature>
<feature type="active site" description="Proton acceptor" evidence="1">
    <location>
        <position position="328"/>
    </location>
</feature>
<feature type="binding site" evidence="1">
    <location>
        <position position="131"/>
    </location>
    <ligand>
        <name>NAD(+)</name>
        <dbReference type="ChEBI" id="CHEBI:57540"/>
    </ligand>
</feature>
<feature type="binding site" evidence="1">
    <location>
        <position position="189"/>
    </location>
    <ligand>
        <name>NAD(+)</name>
        <dbReference type="ChEBI" id="CHEBI:57540"/>
    </ligand>
</feature>
<feature type="binding site" evidence="1">
    <location>
        <position position="212"/>
    </location>
    <ligand>
        <name>NAD(+)</name>
        <dbReference type="ChEBI" id="CHEBI:57540"/>
    </ligand>
</feature>
<feature type="binding site" evidence="1">
    <location>
        <position position="238"/>
    </location>
    <ligand>
        <name>substrate</name>
    </ligand>
</feature>
<feature type="binding site" evidence="1">
    <location>
        <position position="260"/>
    </location>
    <ligand>
        <name>substrate</name>
    </ligand>
</feature>
<feature type="binding site" evidence="1">
    <location>
        <position position="260"/>
    </location>
    <ligand>
        <name>Zn(2+)</name>
        <dbReference type="ChEBI" id="CHEBI:29105"/>
    </ligand>
</feature>
<feature type="binding site" evidence="1">
    <location>
        <position position="263"/>
    </location>
    <ligand>
        <name>substrate</name>
    </ligand>
</feature>
<feature type="binding site" evidence="1">
    <location>
        <position position="263"/>
    </location>
    <ligand>
        <name>Zn(2+)</name>
        <dbReference type="ChEBI" id="CHEBI:29105"/>
    </ligand>
</feature>
<feature type="binding site" evidence="1">
    <location>
        <position position="328"/>
    </location>
    <ligand>
        <name>substrate</name>
    </ligand>
</feature>
<feature type="binding site" evidence="1">
    <location>
        <position position="361"/>
    </location>
    <ligand>
        <name>substrate</name>
    </ligand>
</feature>
<feature type="binding site" evidence="1">
    <location>
        <position position="361"/>
    </location>
    <ligand>
        <name>Zn(2+)</name>
        <dbReference type="ChEBI" id="CHEBI:29105"/>
    </ligand>
</feature>
<feature type="binding site" evidence="1">
    <location>
        <position position="415"/>
    </location>
    <ligand>
        <name>substrate</name>
    </ligand>
</feature>
<feature type="binding site" evidence="1">
    <location>
        <position position="420"/>
    </location>
    <ligand>
        <name>substrate</name>
    </ligand>
</feature>
<feature type="binding site" evidence="1">
    <location>
        <position position="420"/>
    </location>
    <ligand>
        <name>Zn(2+)</name>
        <dbReference type="ChEBI" id="CHEBI:29105"/>
    </ligand>
</feature>
<evidence type="ECO:0000250" key="1"/>
<evidence type="ECO:0000305" key="2"/>
<accession>Q9ZHE6</accession>
<protein>
    <recommendedName>
        <fullName>Histidinol dehydrogenase</fullName>
        <shortName>HDH</shortName>
        <ecNumber>1.1.1.23</ecNumber>
    </recommendedName>
</protein>
<comment type="function">
    <text evidence="1">Catalyzes the sequential NAD-dependent oxidations of L-histidinol to L-histidinaldehyde and then to L-histidine.</text>
</comment>
<comment type="catalytic activity">
    <reaction>
        <text>L-histidinol + 2 NAD(+) + H2O = L-histidine + 2 NADH + 3 H(+)</text>
        <dbReference type="Rhea" id="RHEA:20641"/>
        <dbReference type="ChEBI" id="CHEBI:15377"/>
        <dbReference type="ChEBI" id="CHEBI:15378"/>
        <dbReference type="ChEBI" id="CHEBI:57540"/>
        <dbReference type="ChEBI" id="CHEBI:57595"/>
        <dbReference type="ChEBI" id="CHEBI:57699"/>
        <dbReference type="ChEBI" id="CHEBI:57945"/>
        <dbReference type="EC" id="1.1.1.23"/>
    </reaction>
</comment>
<comment type="cofactor">
    <cofactor evidence="1">
        <name>Zn(2+)</name>
        <dbReference type="ChEBI" id="CHEBI:29105"/>
    </cofactor>
    <text evidence="1">Binds 1 zinc ion per subunit.</text>
</comment>
<comment type="pathway">
    <text>Amino-acid biosynthesis; L-histidine biosynthesis; L-histidine from 5-phospho-alpha-D-ribose 1-diphosphate: step 9/9.</text>
</comment>
<comment type="subunit">
    <text evidence="1">Homodimer.</text>
</comment>
<comment type="similarity">
    <text evidence="2">Belongs to the histidinol dehydrogenase family.</text>
</comment>
<organism>
    <name type="scientific">Buchnera aphidicola subsp. Schizaphis graminum (strain Sg)</name>
    <dbReference type="NCBI Taxonomy" id="198804"/>
    <lineage>
        <taxon>Bacteria</taxon>
        <taxon>Pseudomonadati</taxon>
        <taxon>Pseudomonadota</taxon>
        <taxon>Gammaproteobacteria</taxon>
        <taxon>Enterobacterales</taxon>
        <taxon>Erwiniaceae</taxon>
        <taxon>Buchnera</taxon>
    </lineage>
</organism>
<reference key="1">
    <citation type="journal article" date="1998" name="Curr. Microbiol.">
        <title>Buchnera aphidicola (Aphid endosymbiont) contains genes encoding enzymes of histidine biosynthesis.</title>
        <authorList>
            <person name="Clark M.A."/>
            <person name="Baumann L."/>
            <person name="Baumann P."/>
        </authorList>
    </citation>
    <scope>NUCLEOTIDE SEQUENCE [GENOMIC DNA]</scope>
</reference>
<reference key="2">
    <citation type="journal article" date="2002" name="Science">
        <title>50 million years of genomic stasis in endosymbiotic bacteria.</title>
        <authorList>
            <person name="Tamas I."/>
            <person name="Klasson L."/>
            <person name="Canbaeck B."/>
            <person name="Naeslund A.K."/>
            <person name="Eriksson A.-S."/>
            <person name="Wernegreen J.J."/>
            <person name="Sandstroem J.P."/>
            <person name="Moran N.A."/>
            <person name="Andersson S.G.E."/>
        </authorList>
    </citation>
    <scope>NUCLEOTIDE SEQUENCE [LARGE SCALE GENOMIC DNA]</scope>
    <source>
        <strain>Sg</strain>
    </source>
</reference>
<gene>
    <name type="primary">hisD</name>
    <name type="ordered locus">BUsg_093</name>
</gene>